<protein>
    <recommendedName>
        <fullName evidence="1">Lipoate-protein ligase A</fullName>
        <ecNumber evidence="1">6.3.1.20</ecNumber>
    </recommendedName>
    <alternativeName>
        <fullName evidence="1">Lipoate--protein ligase</fullName>
    </alternativeName>
</protein>
<keyword id="KW-0067">ATP-binding</keyword>
<keyword id="KW-0963">Cytoplasm</keyword>
<keyword id="KW-0436">Ligase</keyword>
<keyword id="KW-0547">Nucleotide-binding</keyword>
<reference key="1">
    <citation type="submission" date="2007-11" db="EMBL/GenBank/DDBJ databases">
        <authorList>
            <consortium name="The Salmonella enterica serovar Paratyphi B Genome Sequencing Project"/>
            <person name="McClelland M."/>
            <person name="Sanderson E.K."/>
            <person name="Porwollik S."/>
            <person name="Spieth J."/>
            <person name="Clifton W.S."/>
            <person name="Fulton R."/>
            <person name="Cordes M."/>
            <person name="Wollam A."/>
            <person name="Shah N."/>
            <person name="Pepin K."/>
            <person name="Bhonagiri V."/>
            <person name="Nash W."/>
            <person name="Johnson M."/>
            <person name="Thiruvilangam P."/>
            <person name="Wilson R."/>
        </authorList>
    </citation>
    <scope>NUCLEOTIDE SEQUENCE [LARGE SCALE GENOMIC DNA]</scope>
    <source>
        <strain>ATCC BAA-1250 / SPB7</strain>
    </source>
</reference>
<sequence length="338" mass="37778">MTTLRLLISDSYDPWFNLAVEECIFRQMPATQRVLFLWRNADTVVIGRAQNPWKECNTRRMEEDNVRLARRSSGGGAVFHDLGNTCFTFMAGKPEYDKTISTHIVLAALNSLGVMADASGRNDLVVKTPDGDRKVSGSAYRETKDRGFHHGTLLLNADLSRLANYLNPDKKKLAAKGITSVRSRVANLTELLPGITHEQVCQAVTEAFFAHYGERVDAEVISPDKTPDLPNFAETFARQSSWEWNFGQAPAFSHLLDERFTWGGVELHFDVEKGVITRAQAFTDSLNPAPLEALGERLQGCQYRVDVLEQACESLIAEFPAQKGELRELAAWMAQAVR</sequence>
<evidence type="ECO:0000255" key="1">
    <source>
        <dbReference type="HAMAP-Rule" id="MF_01602"/>
    </source>
</evidence>
<evidence type="ECO:0000255" key="2">
    <source>
        <dbReference type="PROSITE-ProRule" id="PRU01067"/>
    </source>
</evidence>
<name>LPLA_SALPB</name>
<feature type="chain" id="PRO_1000088017" description="Lipoate-protein ligase A">
    <location>
        <begin position="1"/>
        <end position="338"/>
    </location>
</feature>
<feature type="domain" description="BPL/LPL catalytic" evidence="2">
    <location>
        <begin position="29"/>
        <end position="216"/>
    </location>
</feature>
<feature type="binding site" evidence="1">
    <location>
        <position position="71"/>
    </location>
    <ligand>
        <name>ATP</name>
        <dbReference type="ChEBI" id="CHEBI:30616"/>
    </ligand>
</feature>
<feature type="binding site" evidence="1">
    <location>
        <begin position="76"/>
        <end position="79"/>
    </location>
    <ligand>
        <name>ATP</name>
        <dbReference type="ChEBI" id="CHEBI:30616"/>
    </ligand>
</feature>
<feature type="binding site" evidence="1">
    <location>
        <position position="134"/>
    </location>
    <ligand>
        <name>(R)-lipoate</name>
        <dbReference type="ChEBI" id="CHEBI:83088"/>
    </ligand>
</feature>
<feature type="binding site" evidence="1">
    <location>
        <position position="134"/>
    </location>
    <ligand>
        <name>ATP</name>
        <dbReference type="ChEBI" id="CHEBI:30616"/>
    </ligand>
</feature>
<dbReference type="EC" id="6.3.1.20" evidence="1"/>
<dbReference type="EMBL" id="CP000886">
    <property type="protein sequence ID" value="ABX71019.1"/>
    <property type="molecule type" value="Genomic_DNA"/>
</dbReference>
<dbReference type="RefSeq" id="WP_000209758.1">
    <property type="nucleotide sequence ID" value="NC_010102.1"/>
</dbReference>
<dbReference type="SMR" id="A9N7E6"/>
<dbReference type="KEGG" id="spq:SPAB_05754"/>
<dbReference type="PATRIC" id="fig|1016998.12.peg.5390"/>
<dbReference type="HOGENOM" id="CLU_022986_0_1_6"/>
<dbReference type="BioCyc" id="SENT1016998:SPAB_RS23475-MONOMER"/>
<dbReference type="UniPathway" id="UPA00537">
    <property type="reaction ID" value="UER00594"/>
</dbReference>
<dbReference type="UniPathway" id="UPA00537">
    <property type="reaction ID" value="UER00595"/>
</dbReference>
<dbReference type="Proteomes" id="UP000008556">
    <property type="component" value="Chromosome"/>
</dbReference>
<dbReference type="GO" id="GO:0005829">
    <property type="term" value="C:cytosol"/>
    <property type="evidence" value="ECO:0007669"/>
    <property type="project" value="TreeGrafter"/>
</dbReference>
<dbReference type="GO" id="GO:0005524">
    <property type="term" value="F:ATP binding"/>
    <property type="evidence" value="ECO:0007669"/>
    <property type="project" value="UniProtKB-KW"/>
</dbReference>
<dbReference type="GO" id="GO:0016979">
    <property type="term" value="F:lipoate-protein ligase activity"/>
    <property type="evidence" value="ECO:0007669"/>
    <property type="project" value="UniProtKB-UniRule"/>
</dbReference>
<dbReference type="GO" id="GO:0017118">
    <property type="term" value="F:lipoyltransferase activity"/>
    <property type="evidence" value="ECO:0007669"/>
    <property type="project" value="TreeGrafter"/>
</dbReference>
<dbReference type="GO" id="GO:0036211">
    <property type="term" value="P:protein modification process"/>
    <property type="evidence" value="ECO:0007669"/>
    <property type="project" value="InterPro"/>
</dbReference>
<dbReference type="CDD" id="cd16443">
    <property type="entry name" value="LplA"/>
    <property type="match status" value="1"/>
</dbReference>
<dbReference type="FunFam" id="3.30.930.10:FF:000024">
    <property type="entry name" value="Lipoate-protein ligase A"/>
    <property type="match status" value="1"/>
</dbReference>
<dbReference type="Gene3D" id="3.30.930.10">
    <property type="entry name" value="Bira Bifunctional Protein, Domain 2"/>
    <property type="match status" value="1"/>
</dbReference>
<dbReference type="Gene3D" id="3.30.390.50">
    <property type="entry name" value="CO dehydrogenase flavoprotein, C-terminal domain"/>
    <property type="match status" value="1"/>
</dbReference>
<dbReference type="HAMAP" id="MF_01602">
    <property type="entry name" value="LplA"/>
    <property type="match status" value="1"/>
</dbReference>
<dbReference type="InterPro" id="IPR045864">
    <property type="entry name" value="aa-tRNA-synth_II/BPL/LPL"/>
</dbReference>
<dbReference type="InterPro" id="IPR004143">
    <property type="entry name" value="BPL_LPL_catalytic"/>
</dbReference>
<dbReference type="InterPro" id="IPR023741">
    <property type="entry name" value="Lipoate_ligase_A"/>
</dbReference>
<dbReference type="InterPro" id="IPR019491">
    <property type="entry name" value="Lipoate_protein_ligase_C"/>
</dbReference>
<dbReference type="InterPro" id="IPR004562">
    <property type="entry name" value="LipoylTrfase_LipoateP_Ligase"/>
</dbReference>
<dbReference type="NCBIfam" id="TIGR00545">
    <property type="entry name" value="lipoyltrans"/>
    <property type="match status" value="1"/>
</dbReference>
<dbReference type="PANTHER" id="PTHR12561">
    <property type="entry name" value="LIPOATE-PROTEIN LIGASE"/>
    <property type="match status" value="1"/>
</dbReference>
<dbReference type="PANTHER" id="PTHR12561:SF3">
    <property type="entry name" value="LIPOYLTRANSFERASE 1, MITOCHONDRIAL"/>
    <property type="match status" value="1"/>
</dbReference>
<dbReference type="Pfam" id="PF10437">
    <property type="entry name" value="Lip_prot_lig_C"/>
    <property type="match status" value="1"/>
</dbReference>
<dbReference type="Pfam" id="PF21948">
    <property type="entry name" value="LplA-B_cat"/>
    <property type="match status" value="1"/>
</dbReference>
<dbReference type="SUPFAM" id="SSF55681">
    <property type="entry name" value="Class II aaRS and biotin synthetases"/>
    <property type="match status" value="1"/>
</dbReference>
<dbReference type="SUPFAM" id="SSF82649">
    <property type="entry name" value="SufE/NifU"/>
    <property type="match status" value="1"/>
</dbReference>
<dbReference type="PROSITE" id="PS51733">
    <property type="entry name" value="BPL_LPL_CATALYTIC"/>
    <property type="match status" value="1"/>
</dbReference>
<proteinExistence type="inferred from homology"/>
<comment type="function">
    <text evidence="1">Catalyzes both the ATP-dependent activation of exogenously supplied lipoate to lipoyl-AMP and the transfer of the activated lipoyl onto the lipoyl domains of lipoate-dependent enzymes.</text>
</comment>
<comment type="catalytic activity">
    <reaction evidence="1">
        <text>L-lysyl-[lipoyl-carrier protein] + (R)-lipoate + ATP = N(6)-[(R)-lipoyl]-L-lysyl-[lipoyl-carrier protein] + AMP + diphosphate + H(+)</text>
        <dbReference type="Rhea" id="RHEA:49288"/>
        <dbReference type="Rhea" id="RHEA-COMP:10500"/>
        <dbReference type="Rhea" id="RHEA-COMP:10502"/>
        <dbReference type="ChEBI" id="CHEBI:15378"/>
        <dbReference type="ChEBI" id="CHEBI:29969"/>
        <dbReference type="ChEBI" id="CHEBI:30616"/>
        <dbReference type="ChEBI" id="CHEBI:33019"/>
        <dbReference type="ChEBI" id="CHEBI:83088"/>
        <dbReference type="ChEBI" id="CHEBI:83099"/>
        <dbReference type="ChEBI" id="CHEBI:456215"/>
        <dbReference type="EC" id="6.3.1.20"/>
    </reaction>
</comment>
<comment type="pathway">
    <text evidence="1">Protein modification; protein lipoylation via exogenous pathway; protein N(6)-(lipoyl)lysine from lipoate: step 1/2.</text>
</comment>
<comment type="pathway">
    <text evidence="1">Protein modification; protein lipoylation via exogenous pathway; protein N(6)-(lipoyl)lysine from lipoate: step 2/2.</text>
</comment>
<comment type="subunit">
    <text evidence="1">Monomer.</text>
</comment>
<comment type="subcellular location">
    <subcellularLocation>
        <location evidence="1">Cytoplasm</location>
    </subcellularLocation>
</comment>
<comment type="miscellaneous">
    <text evidence="1">In the transfer reaction, the free carboxyl group of lipoic acid is attached via an amide linkage to the epsilon-amino group of a specific lysine residue of lipoyl domains of lipoate-dependent enzymes.</text>
</comment>
<comment type="similarity">
    <text evidence="1">Belongs to the LplA family.</text>
</comment>
<gene>
    <name evidence="1" type="primary">lplA</name>
    <name type="ordered locus">SPAB_05754</name>
</gene>
<accession>A9N7E6</accession>
<organism>
    <name type="scientific">Salmonella paratyphi B (strain ATCC BAA-1250 / SPB7)</name>
    <dbReference type="NCBI Taxonomy" id="1016998"/>
    <lineage>
        <taxon>Bacteria</taxon>
        <taxon>Pseudomonadati</taxon>
        <taxon>Pseudomonadota</taxon>
        <taxon>Gammaproteobacteria</taxon>
        <taxon>Enterobacterales</taxon>
        <taxon>Enterobacteriaceae</taxon>
        <taxon>Salmonella</taxon>
    </lineage>
</organism>